<proteinExistence type="evidence at protein level"/>
<accession>Q9P0W2</accession>
<accession>A6NMS5</accession>
<accession>D6W616</accession>
<accession>Q6IBP8</accession>
<accession>Q8NBD5</accession>
<accession>Q9HD21</accession>
<accession>Q9Y491</accession>
<accession>Q9Y4A2</accession>
<dbReference type="EMBL" id="AF146223">
    <property type="protein sequence ID" value="AAF66707.1"/>
    <property type="molecule type" value="mRNA"/>
</dbReference>
<dbReference type="EMBL" id="AL355709">
    <property type="protein sequence ID" value="CAB90809.2"/>
    <property type="molecule type" value="mRNA"/>
</dbReference>
<dbReference type="EMBL" id="AF331191">
    <property type="protein sequence ID" value="AAG60060.1"/>
    <property type="molecule type" value="mRNA"/>
</dbReference>
<dbReference type="EMBL" id="AF288679">
    <property type="protein sequence ID" value="AAG01174.1"/>
    <property type="molecule type" value="mRNA"/>
</dbReference>
<dbReference type="EMBL" id="AF072165">
    <property type="protein sequence ID" value="AAF76253.1"/>
    <property type="molecule type" value="mRNA"/>
</dbReference>
<dbReference type="EMBL" id="AK090733">
    <property type="protein sequence ID" value="BAC03510.1"/>
    <property type="molecule type" value="mRNA"/>
</dbReference>
<dbReference type="EMBL" id="AC005786">
    <property type="protein sequence ID" value="AAC62837.1"/>
    <property type="molecule type" value="Genomic_DNA"/>
</dbReference>
<dbReference type="EMBL" id="CH471139">
    <property type="protein sequence ID" value="EAW69306.1"/>
    <property type="molecule type" value="Genomic_DNA"/>
</dbReference>
<dbReference type="EMBL" id="CH471139">
    <property type="protein sequence ID" value="EAW69307.1"/>
    <property type="molecule type" value="Genomic_DNA"/>
</dbReference>
<dbReference type="EMBL" id="CH471139">
    <property type="protein sequence ID" value="EAW69308.1"/>
    <property type="molecule type" value="Genomic_DNA"/>
</dbReference>
<dbReference type="EMBL" id="BC002552">
    <property type="protein sequence ID" value="AAH02552.1"/>
    <property type="molecule type" value="mRNA"/>
</dbReference>
<dbReference type="EMBL" id="BC003505">
    <property type="protein sequence ID" value="AAH03505.2"/>
    <property type="molecule type" value="mRNA"/>
</dbReference>
<dbReference type="EMBL" id="BC004408">
    <property type="protein sequence ID" value="AAH04408.2"/>
    <property type="molecule type" value="mRNA"/>
</dbReference>
<dbReference type="EMBL" id="BC021585">
    <property type="protein sequence ID" value="AAH21585.1"/>
    <property type="status" value="ALT_INIT"/>
    <property type="molecule type" value="mRNA"/>
</dbReference>
<dbReference type="EMBL" id="AF072836">
    <property type="protein sequence ID" value="AAC26860.1"/>
    <property type="status" value="ALT_SEQ"/>
    <property type="molecule type" value="mRNA"/>
</dbReference>
<dbReference type="EMBL" id="CR456754">
    <property type="protein sequence ID" value="CAG33035.1"/>
    <property type="molecule type" value="mRNA"/>
</dbReference>
<dbReference type="CCDS" id="CCDS45919.1">
    <molecule id="Q9P0W2-1"/>
</dbReference>
<dbReference type="RefSeq" id="NP_006330.2">
    <molecule id="Q9P0W2-1"/>
    <property type="nucleotide sequence ID" value="NM_006339.3"/>
</dbReference>
<dbReference type="SMR" id="Q9P0W2"/>
<dbReference type="BioGRID" id="115642">
    <property type="interactions" value="119"/>
</dbReference>
<dbReference type="CORUM" id="Q9P0W2"/>
<dbReference type="FunCoup" id="Q9P0W2">
    <property type="interactions" value="1726"/>
</dbReference>
<dbReference type="IntAct" id="Q9P0W2">
    <property type="interactions" value="68"/>
</dbReference>
<dbReference type="MINT" id="Q9P0W2"/>
<dbReference type="STRING" id="9606.ENSP00000328269"/>
<dbReference type="GlyGen" id="Q9P0W2">
    <property type="glycosylation" value="1 site, 1 O-linked glycan (1 site)"/>
</dbReference>
<dbReference type="iPTMnet" id="Q9P0W2"/>
<dbReference type="PhosphoSitePlus" id="Q9P0W2"/>
<dbReference type="BioMuta" id="HMG20B"/>
<dbReference type="jPOST" id="Q9P0W2"/>
<dbReference type="MassIVE" id="Q9P0W2"/>
<dbReference type="PaxDb" id="9606-ENSP00000328269"/>
<dbReference type="PeptideAtlas" id="Q9P0W2"/>
<dbReference type="ProteomicsDB" id="83610">
    <molecule id="Q9P0W2-1"/>
</dbReference>
<dbReference type="ProteomicsDB" id="83611">
    <molecule id="Q9P0W2-2"/>
</dbReference>
<dbReference type="ProteomicsDB" id="83612">
    <molecule id="Q9P0W2-3"/>
</dbReference>
<dbReference type="Pumba" id="Q9P0W2"/>
<dbReference type="Antibodypedia" id="23254">
    <property type="antibodies" value="303 antibodies from 34 providers"/>
</dbReference>
<dbReference type="DNASU" id="10362"/>
<dbReference type="Ensembl" id="ENST00000333651.11">
    <molecule id="Q9P0W2-1"/>
    <property type="protein sequence ID" value="ENSP00000328269.6"/>
    <property type="gene ID" value="ENSG00000064961.19"/>
</dbReference>
<dbReference type="GeneID" id="10362"/>
<dbReference type="KEGG" id="hsa:10362"/>
<dbReference type="MANE-Select" id="ENST00000333651.11">
    <property type="protein sequence ID" value="ENSP00000328269.6"/>
    <property type="RefSeq nucleotide sequence ID" value="NM_006339.3"/>
    <property type="RefSeq protein sequence ID" value="NP_006330.2"/>
</dbReference>
<dbReference type="UCSC" id="uc002lya.4">
    <molecule id="Q9P0W2-1"/>
    <property type="organism name" value="human"/>
</dbReference>
<dbReference type="AGR" id="HGNC:5002"/>
<dbReference type="CTD" id="10362"/>
<dbReference type="DisGeNET" id="10362"/>
<dbReference type="GeneCards" id="HMG20B"/>
<dbReference type="HGNC" id="HGNC:5002">
    <property type="gene designation" value="HMG20B"/>
</dbReference>
<dbReference type="HPA" id="ENSG00000064961">
    <property type="expression patterns" value="Low tissue specificity"/>
</dbReference>
<dbReference type="MIM" id="605535">
    <property type="type" value="gene"/>
</dbReference>
<dbReference type="neXtProt" id="NX_Q9P0W2"/>
<dbReference type="OpenTargets" id="ENSG00000064961"/>
<dbReference type="PharmGKB" id="PA29332"/>
<dbReference type="VEuPathDB" id="HostDB:ENSG00000064961"/>
<dbReference type="eggNOG" id="KOG0381">
    <property type="taxonomic scope" value="Eukaryota"/>
</dbReference>
<dbReference type="GeneTree" id="ENSGT00940000161213"/>
<dbReference type="InParanoid" id="Q9P0W2"/>
<dbReference type="OMA" id="NIDRYMH"/>
<dbReference type="OrthoDB" id="3213154at2759"/>
<dbReference type="PAN-GO" id="Q9P0W2">
    <property type="GO annotations" value="2 GO annotations based on evolutionary models"/>
</dbReference>
<dbReference type="PhylomeDB" id="Q9P0W2"/>
<dbReference type="TreeFam" id="TF106440"/>
<dbReference type="PathwayCommons" id="Q9P0W2"/>
<dbReference type="Reactome" id="R-HSA-3214815">
    <property type="pathway name" value="HDACs deacetylate histones"/>
</dbReference>
<dbReference type="Reactome" id="R-HSA-9679191">
    <property type="pathway name" value="Potential therapeutics for SARS"/>
</dbReference>
<dbReference type="Reactome" id="R-HSA-983231">
    <property type="pathway name" value="Factors involved in megakaryocyte development and platelet production"/>
</dbReference>
<dbReference type="SignaLink" id="Q9P0W2"/>
<dbReference type="SIGNOR" id="Q9P0W2"/>
<dbReference type="BioGRID-ORCS" id="10362">
    <property type="hits" value="13 hits in 1182 CRISPR screens"/>
</dbReference>
<dbReference type="ChiTaRS" id="HMG20B">
    <property type="organism name" value="human"/>
</dbReference>
<dbReference type="GeneWiki" id="HMG20B"/>
<dbReference type="GenomeRNAi" id="10362"/>
<dbReference type="Pharos" id="Q9P0W2">
    <property type="development level" value="Tbio"/>
</dbReference>
<dbReference type="PRO" id="PR:Q9P0W2"/>
<dbReference type="Proteomes" id="UP000005640">
    <property type="component" value="Chromosome 19"/>
</dbReference>
<dbReference type="RNAct" id="Q9P0W2">
    <property type="molecule type" value="protein"/>
</dbReference>
<dbReference type="Bgee" id="ENSG00000064961">
    <property type="expression patterns" value="Expressed in lower esophagus muscularis layer and 180 other cell types or tissues"/>
</dbReference>
<dbReference type="ExpressionAtlas" id="Q9P0W2">
    <property type="expression patterns" value="baseline and differential"/>
</dbReference>
<dbReference type="GO" id="GO:0005694">
    <property type="term" value="C:chromosome"/>
    <property type="evidence" value="ECO:0007669"/>
    <property type="project" value="UniProtKB-SubCell"/>
</dbReference>
<dbReference type="GO" id="GO:0016604">
    <property type="term" value="C:nuclear body"/>
    <property type="evidence" value="ECO:0000314"/>
    <property type="project" value="HPA"/>
</dbReference>
<dbReference type="GO" id="GO:0005654">
    <property type="term" value="C:nucleoplasm"/>
    <property type="evidence" value="ECO:0000314"/>
    <property type="project" value="HPA"/>
</dbReference>
<dbReference type="GO" id="GO:0005634">
    <property type="term" value="C:nucleus"/>
    <property type="evidence" value="ECO:0000318"/>
    <property type="project" value="GO_Central"/>
</dbReference>
<dbReference type="GO" id="GO:0003677">
    <property type="term" value="F:DNA binding"/>
    <property type="evidence" value="ECO:0007669"/>
    <property type="project" value="UniProtKB-KW"/>
</dbReference>
<dbReference type="GO" id="GO:0006325">
    <property type="term" value="P:chromatin organization"/>
    <property type="evidence" value="ECO:0007669"/>
    <property type="project" value="UniProtKB-KW"/>
</dbReference>
<dbReference type="GO" id="GO:0033234">
    <property type="term" value="P:negative regulation of protein sumoylation"/>
    <property type="evidence" value="ECO:0007669"/>
    <property type="project" value="Ensembl"/>
</dbReference>
<dbReference type="GO" id="GO:0045666">
    <property type="term" value="P:positive regulation of neuron differentiation"/>
    <property type="evidence" value="ECO:0007669"/>
    <property type="project" value="Ensembl"/>
</dbReference>
<dbReference type="GO" id="GO:0016925">
    <property type="term" value="P:protein sumoylation"/>
    <property type="evidence" value="ECO:0007669"/>
    <property type="project" value="Ensembl"/>
</dbReference>
<dbReference type="GO" id="GO:0010468">
    <property type="term" value="P:regulation of gene expression"/>
    <property type="evidence" value="ECO:0000318"/>
    <property type="project" value="GO_Central"/>
</dbReference>
<dbReference type="GO" id="GO:0035914">
    <property type="term" value="P:skeletal muscle cell differentiation"/>
    <property type="evidence" value="ECO:0007669"/>
    <property type="project" value="Ensembl"/>
</dbReference>
<dbReference type="CDD" id="cd22018">
    <property type="entry name" value="HMG-box_HMG20B"/>
    <property type="match status" value="1"/>
</dbReference>
<dbReference type="FunFam" id="1.10.30.10:FF:000034">
    <property type="entry name" value="SWI/SNF-related matrix-associated regulator of chromatin subfamily E member 1-related"/>
    <property type="match status" value="1"/>
</dbReference>
<dbReference type="Gene3D" id="1.10.30.10">
    <property type="entry name" value="High mobility group box domain"/>
    <property type="match status" value="1"/>
</dbReference>
<dbReference type="InterPro" id="IPR051965">
    <property type="entry name" value="ChromReg_NeuronalGeneExpr"/>
</dbReference>
<dbReference type="InterPro" id="IPR009071">
    <property type="entry name" value="HMG_box_dom"/>
</dbReference>
<dbReference type="InterPro" id="IPR036910">
    <property type="entry name" value="HMG_box_dom_sf"/>
</dbReference>
<dbReference type="PANTHER" id="PTHR46040">
    <property type="entry name" value="HIGH MOBILITY GROUP PROTEIN 2"/>
    <property type="match status" value="1"/>
</dbReference>
<dbReference type="PANTHER" id="PTHR46040:SF2">
    <property type="entry name" value="SWI_SNF-RELATED MATRIX-ASSOCIATED ACTIN-DEPENDENT REGULATOR OF CHROMATIN SUBFAMILY E MEMBER 1-RELATED"/>
    <property type="match status" value="1"/>
</dbReference>
<dbReference type="Pfam" id="PF00505">
    <property type="entry name" value="HMG_box"/>
    <property type="match status" value="1"/>
</dbReference>
<dbReference type="PRINTS" id="PR00886">
    <property type="entry name" value="HIGHMOBLTY12"/>
</dbReference>
<dbReference type="SMART" id="SM00398">
    <property type="entry name" value="HMG"/>
    <property type="match status" value="1"/>
</dbReference>
<dbReference type="SUPFAM" id="SSF47095">
    <property type="entry name" value="HMG-box"/>
    <property type="match status" value="1"/>
</dbReference>
<dbReference type="PROSITE" id="PS50118">
    <property type="entry name" value="HMG_BOX_2"/>
    <property type="match status" value="1"/>
</dbReference>
<feature type="chain" id="PRO_0000048575" description="SWI/SNF-related matrix-associated actin-dependent regulator of chromatin subfamily E member 1-related">
    <location>
        <begin position="1"/>
        <end position="317"/>
    </location>
</feature>
<feature type="DNA-binding region" description="HMG box" evidence="3">
    <location>
        <begin position="70"/>
        <end position="138"/>
    </location>
</feature>
<feature type="region of interest" description="Disordered" evidence="4">
    <location>
        <begin position="1"/>
        <end position="71"/>
    </location>
</feature>
<feature type="coiled-coil region" evidence="2">
    <location>
        <begin position="190"/>
        <end position="257"/>
    </location>
</feature>
<feature type="compositionally biased region" description="Low complexity" evidence="4">
    <location>
        <begin position="1"/>
        <end position="17"/>
    </location>
</feature>
<feature type="compositionally biased region" description="Basic and acidic residues" evidence="4">
    <location>
        <begin position="31"/>
        <end position="52"/>
    </location>
</feature>
<feature type="compositionally biased region" description="Basic residues" evidence="4">
    <location>
        <begin position="53"/>
        <end position="65"/>
    </location>
</feature>
<feature type="modified residue" description="Phosphoserine" evidence="13">
    <location>
        <position position="160"/>
    </location>
</feature>
<feature type="cross-link" description="Glycyl lysine isopeptide (Lys-Gly) (interchain with G-Cter in SUMO2)" evidence="14 15">
    <location>
        <position position="31"/>
    </location>
</feature>
<feature type="splice variant" id="VSP_037131" description="In isoform 2." evidence="10">
    <location>
        <begin position="1"/>
        <end position="102"/>
    </location>
</feature>
<feature type="splice variant" id="VSP_037132" description="In isoform 3." evidence="11">
    <location>
        <begin position="83"/>
        <end position="106"/>
    </location>
</feature>
<feature type="mutagenesis site" description="Loss of DNA binding activity of the BHC histone deacetylase complex." evidence="8">
    <original>K</original>
    <variation>I</variation>
    <location>
        <position position="116"/>
    </location>
</feature>
<feature type="sequence conflict" description="In Ref. 3; AAG01174." evidence="12" ref="3">
    <original>AA</original>
    <variation>SS</variation>
    <location>
        <begin position="11"/>
        <end position="12"/>
    </location>
</feature>
<feature type="sequence conflict" description="In Ref. 10; CAG33035." evidence="12" ref="10">
    <original>G</original>
    <variation>D</variation>
    <location>
        <position position="174"/>
    </location>
</feature>
<feature type="sequence conflict" description="In Ref. 9; AAC26860." evidence="12" ref="9">
    <original>H</original>
    <variation>Q</variation>
    <location>
        <position position="223"/>
    </location>
</feature>
<feature type="sequence conflict" description="In Ref. 5; BAC03510." evidence="12" ref="5">
    <original>G</original>
    <variation>D</variation>
    <location>
        <position position="270"/>
    </location>
</feature>
<keyword id="KW-0025">Alternative splicing</keyword>
<keyword id="KW-0131">Cell cycle</keyword>
<keyword id="KW-0156">Chromatin regulator</keyword>
<keyword id="KW-0158">Chromosome</keyword>
<keyword id="KW-0175">Coiled coil</keyword>
<keyword id="KW-0238">DNA-binding</keyword>
<keyword id="KW-1017">Isopeptide bond</keyword>
<keyword id="KW-0539">Nucleus</keyword>
<keyword id="KW-0597">Phosphoprotein</keyword>
<keyword id="KW-1267">Proteomics identification</keyword>
<keyword id="KW-1185">Reference proteome</keyword>
<keyword id="KW-0804">Transcription</keyword>
<keyword id="KW-0805">Transcription regulation</keyword>
<keyword id="KW-0832">Ubl conjugation</keyword>
<protein>
    <recommendedName>
        <fullName>SWI/SNF-related matrix-associated actin-dependent regulator of chromatin subfamily E member 1-related</fullName>
        <shortName>SMARCE1-related protein</shortName>
    </recommendedName>
    <alternativeName>
        <fullName>BRCA2-associated factor 35</fullName>
    </alternativeName>
    <alternativeName>
        <fullName>HMG box-containing protein 20B</fullName>
    </alternativeName>
    <alternativeName>
        <fullName>HMG domain-containing protein 2</fullName>
    </alternativeName>
    <alternativeName>
        <fullName>HMG domain-containing protein HMGX2</fullName>
    </alternativeName>
    <alternativeName>
        <fullName>Sox-like transcriptional factor</fullName>
    </alternativeName>
    <alternativeName>
        <fullName>Structural DNA-binding protein BRAF35</fullName>
    </alternativeName>
</protein>
<sequence length="317" mass="35813">MSHGPKQPGAAAAPAGGKAPGQHGGFVVTVKQERGEGPRAGEKGSHEEEPVKKRGWPKGKKRKKILPNGPKAPVTGYVRFLNERREQIRTRHPDLPFPEITKMLGAEWSKLQPTEKQRYLDEAEREKQQYMKELRAYQQSEAYKMCTEKIQEKKIKKEDSSSGLMNTLLNGHKGGDCDGFSTFDVPIFTEEFLDQNKAREAELRRLRKMNVAFEEQNAVLQRHTQSMSSARERLEQELALEERRTLALQQQLQAVRQALTASFASLPVPGTGETPTLGTLDFYMARLHGAIERDPAQHEKLIVRIKEILAQVASEHL</sequence>
<organism>
    <name type="scientific">Homo sapiens</name>
    <name type="common">Human</name>
    <dbReference type="NCBI Taxonomy" id="9606"/>
    <lineage>
        <taxon>Eukaryota</taxon>
        <taxon>Metazoa</taxon>
        <taxon>Chordata</taxon>
        <taxon>Craniata</taxon>
        <taxon>Vertebrata</taxon>
        <taxon>Euteleostomi</taxon>
        <taxon>Mammalia</taxon>
        <taxon>Eutheria</taxon>
        <taxon>Euarchontoglires</taxon>
        <taxon>Primates</taxon>
        <taxon>Haplorrhini</taxon>
        <taxon>Catarrhini</taxon>
        <taxon>Hominidae</taxon>
        <taxon>Homo</taxon>
    </lineage>
</organism>
<name>HM20B_HUMAN</name>
<gene>
    <name type="primary">HMG20B</name>
    <name type="synonym">BRAF35</name>
    <name type="synonym">HMGX2</name>
    <name type="synonym">HMGXB2</name>
    <name type="synonym">SMARCE1R</name>
</gene>
<evidence type="ECO:0000250" key="1">
    <source>
        <dbReference type="UniProtKB" id="Q9Z104"/>
    </source>
</evidence>
<evidence type="ECO:0000255" key="2"/>
<evidence type="ECO:0000255" key="3">
    <source>
        <dbReference type="PROSITE-ProRule" id="PRU00267"/>
    </source>
</evidence>
<evidence type="ECO:0000256" key="4">
    <source>
        <dbReference type="SAM" id="MobiDB-lite"/>
    </source>
</evidence>
<evidence type="ECO:0000269" key="5">
    <source>
    </source>
</evidence>
<evidence type="ECO:0000269" key="6">
    <source>
    </source>
</evidence>
<evidence type="ECO:0000269" key="7">
    <source>
    </source>
</evidence>
<evidence type="ECO:0000269" key="8">
    <source>
    </source>
</evidence>
<evidence type="ECO:0000269" key="9">
    <source>
    </source>
</evidence>
<evidence type="ECO:0000303" key="10">
    <source>
    </source>
</evidence>
<evidence type="ECO:0000303" key="11">
    <source>
    </source>
</evidence>
<evidence type="ECO:0000305" key="12"/>
<evidence type="ECO:0007744" key="13">
    <source>
    </source>
</evidence>
<evidence type="ECO:0007744" key="14">
    <source>
    </source>
</evidence>
<evidence type="ECO:0007744" key="15">
    <source>
    </source>
</evidence>
<comment type="function">
    <text>Required for correct progression through G2 phase of the cell cycle and entry into mitosis. Required for RCOR1/CoREST mediated repression of neuronal specific gene promoters.</text>
</comment>
<comment type="subunit">
    <text evidence="1 6 9">Component of a BHC histone deacetylase complex that contains HDAC1, HDAC2, HMG20B/BRAF35, KDM1A, RCOR1/CoREST and PHF21A/BHC80. The BHC complex may also contain ZMYM2, ZNF217, ZMYM3, GSE1 and GTF2I. Interacts with the BRCA2 tumor suppressor protein. Interacts with DTNB (By similarity).</text>
</comment>
<comment type="interaction">
    <interactant intactId="EBI-713401">
        <id>Q9P0W2</id>
    </interactant>
    <interactant intactId="EBI-11954292">
        <id>Q86V38</id>
        <label>ATN1</label>
    </interactant>
    <organismsDiffer>false</organismsDiffer>
    <experiments>3</experiments>
</comment>
<comment type="interaction">
    <interactant intactId="EBI-713401">
        <id>Q9P0W2</id>
    </interactant>
    <interactant intactId="EBI-79792">
        <id>P51587</id>
        <label>BRCA2</label>
    </interactant>
    <organismsDiffer>false</organismsDiffer>
    <experiments>8</experiments>
</comment>
<comment type="interaction">
    <interactant intactId="EBI-713401">
        <id>Q9P0W2</id>
    </interactant>
    <interactant intactId="EBI-725606">
        <id>Q9NWQ9</id>
        <label>C14orf119</label>
    </interactant>
    <organismsDiffer>false</organismsDiffer>
    <experiments>3</experiments>
</comment>
<comment type="interaction">
    <interactant intactId="EBI-713401">
        <id>Q9P0W2</id>
    </interactant>
    <interactant intactId="EBI-10171570">
        <id>Q68D86</id>
        <label>CCDC102B</label>
    </interactant>
    <organismsDiffer>false</organismsDiffer>
    <experiments>6</experiments>
</comment>
<comment type="interaction">
    <interactant intactId="EBI-713401">
        <id>Q9P0W2</id>
    </interactant>
    <interactant intactId="EBI-10171416">
        <id>Q96JN2-2</id>
        <label>CCDC136</label>
    </interactant>
    <organismsDiffer>false</organismsDiffer>
    <experiments>3</experiments>
</comment>
<comment type="interaction">
    <interactant intactId="EBI-713401">
        <id>Q9P0W2</id>
    </interactant>
    <interactant intactId="EBI-6875961">
        <id>P02489</id>
        <label>CRYAA</label>
    </interactant>
    <organismsDiffer>false</organismsDiffer>
    <experiments>4</experiments>
</comment>
<comment type="interaction">
    <interactant intactId="EBI-713401">
        <id>Q9P0W2</id>
    </interactant>
    <interactant intactId="EBI-946830">
        <id>P30040</id>
        <label>ERP29</label>
    </interactant>
    <organismsDiffer>false</organismsDiffer>
    <experiments>6</experiments>
</comment>
<comment type="interaction">
    <interactant intactId="EBI-713401">
        <id>Q9P0W2</id>
    </interactant>
    <interactant intactId="EBI-740641">
        <id>Q9NP66</id>
        <label>HMG20A</label>
    </interactant>
    <organismsDiffer>false</organismsDiffer>
    <experiments>8</experiments>
</comment>
<comment type="interaction">
    <interactant intactId="EBI-713401">
        <id>Q9P0W2</id>
    </interactant>
    <interactant intactId="EBI-466029">
        <id>P42858</id>
        <label>HTT</label>
    </interactant>
    <organismsDiffer>false</organismsDiffer>
    <experiments>3</experiments>
</comment>
<comment type="interaction">
    <interactant intactId="EBI-713401">
        <id>Q9P0W2</id>
    </interactant>
    <interactant intactId="EBI-2432309">
        <id>Q92876</id>
        <label>KLK6</label>
    </interactant>
    <organismsDiffer>false</organismsDiffer>
    <experiments>3</experiments>
</comment>
<comment type="interaction">
    <interactant intactId="EBI-713401">
        <id>Q9P0W2</id>
    </interactant>
    <interactant intactId="EBI-739566">
        <id>P19012</id>
        <label>KRT15</label>
    </interactant>
    <organismsDiffer>false</organismsDiffer>
    <experiments>3</experiments>
</comment>
<comment type="interaction">
    <interactant intactId="EBI-713401">
        <id>Q9P0W2</id>
    </interactant>
    <interactant intactId="EBI-1047263">
        <id>O76015</id>
        <label>KRT38</label>
    </interactant>
    <organismsDiffer>false</organismsDiffer>
    <experiments>6</experiments>
</comment>
<comment type="interaction">
    <interactant intactId="EBI-713401">
        <id>Q9P0W2</id>
    </interactant>
    <interactant intactId="EBI-591778">
        <id>P61970</id>
        <label>NUTF2</label>
    </interactant>
    <organismsDiffer>false</organismsDiffer>
    <experiments>3</experiments>
</comment>
<comment type="interaction">
    <interactant intactId="EBI-713401">
        <id>Q9P0W2</id>
    </interactant>
    <interactant intactId="EBI-348567">
        <id>O75928-2</id>
        <label>PIAS2</label>
    </interactant>
    <organismsDiffer>false</organismsDiffer>
    <experiments>5</experiments>
</comment>
<comment type="interaction">
    <interactant intactId="EBI-713401">
        <id>Q9P0W2</id>
    </interactant>
    <interactant intactId="EBI-1105153">
        <id>Q96KQ4</id>
        <label>PPP1R13B</label>
    </interactant>
    <organismsDiffer>false</organismsDiffer>
    <experiments>3</experiments>
</comment>
<comment type="interaction">
    <interactant intactId="EBI-713401">
        <id>Q9P0W2</id>
    </interactant>
    <interactant intactId="EBI-12004298">
        <id>O75971-2</id>
        <label>SNAPC5</label>
    </interactant>
    <organismsDiffer>false</organismsDiffer>
    <experiments>3</experiments>
</comment>
<comment type="interaction">
    <interactant intactId="EBI-713401">
        <id>Q9P0W2</id>
    </interactant>
    <interactant intactId="EBI-5235340">
        <id>Q7Z699</id>
        <label>SPRED1</label>
    </interactant>
    <organismsDiffer>false</organismsDiffer>
    <experiments>3</experiments>
</comment>
<comment type="interaction">
    <interactant intactId="EBI-713401">
        <id>Q9P0W2</id>
    </interactant>
    <interactant intactId="EBI-6872807">
        <id>Q8N0S2</id>
        <label>SYCE1</label>
    </interactant>
    <organismsDiffer>false</organismsDiffer>
    <experiments>3</experiments>
</comment>
<comment type="interaction">
    <interactant intactId="EBI-713401">
        <id>Q9P0W2</id>
    </interactant>
    <interactant intactId="EBI-1105213">
        <id>Q9UBB9</id>
        <label>TFIP11</label>
    </interactant>
    <organismsDiffer>false</organismsDiffer>
    <experiments>3</experiments>
</comment>
<comment type="interaction">
    <interactant intactId="EBI-713401">
        <id>Q9P0W2</id>
    </interactant>
    <interactant intactId="EBI-12806590">
        <id>Q86WV8</id>
        <label>TSC1</label>
    </interactant>
    <organismsDiffer>false</organismsDiffer>
    <experiments>3</experiments>
</comment>
<comment type="interaction">
    <interactant intactId="EBI-713401">
        <id>Q9P0W2</id>
    </interactant>
    <interactant intactId="EBI-739895">
        <id>Q8N6Y0</id>
        <label>USHBP1</label>
    </interactant>
    <organismsDiffer>false</organismsDiffer>
    <experiments>3</experiments>
</comment>
<comment type="subcellular location">
    <subcellularLocation>
        <location>Nucleus</location>
    </subcellularLocation>
    <subcellularLocation>
        <location>Chromosome</location>
    </subcellularLocation>
    <text>Localized to condensed chromosomes in mitosis in conjunction with BRCA2.</text>
</comment>
<comment type="alternative products">
    <event type="alternative splicing"/>
    <isoform>
        <id>Q9P0W2-1</id>
        <name>1</name>
        <sequence type="displayed"/>
    </isoform>
    <isoform>
        <id>Q9P0W2-2</id>
        <name>2</name>
        <sequence type="described" ref="VSP_037131"/>
    </isoform>
    <isoform>
        <id>Q9P0W2-3</id>
        <name>3</name>
        <sequence type="described" ref="VSP_037132"/>
    </isoform>
</comment>
<comment type="tissue specificity">
    <text evidence="5 7">Ubiquitously expressed in adult tissues.</text>
</comment>
<comment type="sequence caution" evidence="12">
    <conflict type="erroneous initiation">
        <sequence resource="EMBL-CDS" id="AAC26860"/>
    </conflict>
    <text>Truncated N-terminus.</text>
</comment>
<comment type="sequence caution" evidence="12">
    <conflict type="frameshift">
        <sequence resource="EMBL-CDS" id="AAC26860"/>
    </conflict>
</comment>
<comment type="sequence caution" evidence="12">
    <conflict type="erroneous initiation">
        <sequence resource="EMBL-CDS" id="AAH21585"/>
    </conflict>
</comment>
<reference key="1">
    <citation type="journal article" date="2000" name="Cytogenet. Cell Genet.">
        <title>HMG20A and HMG20B map to human chromosomes 15q24 and 19p13.3 and constitute a distinct class of HMG-box genes with ubiquitous expression.</title>
        <authorList>
            <person name="Sumoy L."/>
            <person name="Carim-Todd L."/>
            <person name="Escarceller M."/>
            <person name="Nadal M."/>
            <person name="Gratacos M."/>
            <person name="Pujana M.A."/>
            <person name="Estivill X."/>
            <person name="Peral B."/>
        </authorList>
    </citation>
    <scope>NUCLEOTIDE SEQUENCE [MRNA] (ISOFORM 1)</scope>
    <scope>TISSUE SPECIFICITY</scope>
</reference>
<reference key="2">
    <citation type="journal article" date="2001" name="Cell">
        <title>A human BRCA2 complex containing a structural DNA binding component influences cell cycle progression.</title>
        <authorList>
            <person name="Marmorstein L.Y."/>
            <person name="Kinev A.V."/>
            <person name="Chan G.K.T."/>
            <person name="Bochar D.A."/>
            <person name="Beniya H."/>
            <person name="Epstein J.A."/>
            <person name="Yen T.J."/>
            <person name="Shiekhattar R."/>
        </authorList>
    </citation>
    <scope>NUCLEOTIDE SEQUENCE [MRNA] (ISOFORM 1)</scope>
    <scope>INTERACTION WITH BRCA2</scope>
    <scope>SUBCELLULAR LOCATION</scope>
</reference>
<reference key="3">
    <citation type="journal article" date="2002" name="Biochim. Biophys. Acta">
        <title>Characterization of human SMARCE1r high-mobility-group protein.</title>
        <authorList>
            <person name="Lee Y.M."/>
            <person name="Shin H."/>
            <person name="Choi W."/>
            <person name="Ahn S."/>
            <person name="Kim W."/>
        </authorList>
    </citation>
    <scope>NUCLEOTIDE SEQUENCE [MRNA] (ISOFORM 1)</scope>
    <scope>SUBCELLULAR LOCATION</scope>
    <scope>TISSUE SPECIFICITY</scope>
</reference>
<reference key="4">
    <citation type="journal article" date="2002" name="Biochem. Biophys. Res. Commun.">
        <title>Cloning a cDNA encoding an alternatively spliced protein of BRCA2-associated factor 35.</title>
        <authorList>
            <person name="Wang C."/>
            <person name="McCarty I.M."/>
            <person name="Balazs L."/>
            <person name="Li Y."/>
            <person name="Steiner M.S."/>
        </authorList>
    </citation>
    <scope>NUCLEOTIDE SEQUENCE [MRNA] (ISOFORM 2)</scope>
</reference>
<reference key="5">
    <citation type="journal article" date="2004" name="Nat. Genet.">
        <title>Complete sequencing and characterization of 21,243 full-length human cDNAs.</title>
        <authorList>
            <person name="Ota T."/>
            <person name="Suzuki Y."/>
            <person name="Nishikawa T."/>
            <person name="Otsuki T."/>
            <person name="Sugiyama T."/>
            <person name="Irie R."/>
            <person name="Wakamatsu A."/>
            <person name="Hayashi K."/>
            <person name="Sato H."/>
            <person name="Nagai K."/>
            <person name="Kimura K."/>
            <person name="Makita H."/>
            <person name="Sekine M."/>
            <person name="Obayashi M."/>
            <person name="Nishi T."/>
            <person name="Shibahara T."/>
            <person name="Tanaka T."/>
            <person name="Ishii S."/>
            <person name="Yamamoto J."/>
            <person name="Saito K."/>
            <person name="Kawai Y."/>
            <person name="Isono Y."/>
            <person name="Nakamura Y."/>
            <person name="Nagahari K."/>
            <person name="Murakami K."/>
            <person name="Yasuda T."/>
            <person name="Iwayanagi T."/>
            <person name="Wagatsuma M."/>
            <person name="Shiratori A."/>
            <person name="Sudo H."/>
            <person name="Hosoiri T."/>
            <person name="Kaku Y."/>
            <person name="Kodaira H."/>
            <person name="Kondo H."/>
            <person name="Sugawara M."/>
            <person name="Takahashi M."/>
            <person name="Kanda K."/>
            <person name="Yokoi T."/>
            <person name="Furuya T."/>
            <person name="Kikkawa E."/>
            <person name="Omura Y."/>
            <person name="Abe K."/>
            <person name="Kamihara K."/>
            <person name="Katsuta N."/>
            <person name="Sato K."/>
            <person name="Tanikawa M."/>
            <person name="Yamazaki M."/>
            <person name="Ninomiya K."/>
            <person name="Ishibashi T."/>
            <person name="Yamashita H."/>
            <person name="Murakawa K."/>
            <person name="Fujimori K."/>
            <person name="Tanai H."/>
            <person name="Kimata M."/>
            <person name="Watanabe M."/>
            <person name="Hiraoka S."/>
            <person name="Chiba Y."/>
            <person name="Ishida S."/>
            <person name="Ono Y."/>
            <person name="Takiguchi S."/>
            <person name="Watanabe S."/>
            <person name="Yosida M."/>
            <person name="Hotuta T."/>
            <person name="Kusano J."/>
            <person name="Kanehori K."/>
            <person name="Takahashi-Fujii A."/>
            <person name="Hara H."/>
            <person name="Tanase T.-O."/>
            <person name="Nomura Y."/>
            <person name="Togiya S."/>
            <person name="Komai F."/>
            <person name="Hara R."/>
            <person name="Takeuchi K."/>
            <person name="Arita M."/>
            <person name="Imose N."/>
            <person name="Musashino K."/>
            <person name="Yuuki H."/>
            <person name="Oshima A."/>
            <person name="Sasaki N."/>
            <person name="Aotsuka S."/>
            <person name="Yoshikawa Y."/>
            <person name="Matsunawa H."/>
            <person name="Ichihara T."/>
            <person name="Shiohata N."/>
            <person name="Sano S."/>
            <person name="Moriya S."/>
            <person name="Momiyama H."/>
            <person name="Satoh N."/>
            <person name="Takami S."/>
            <person name="Terashima Y."/>
            <person name="Suzuki O."/>
            <person name="Nakagawa S."/>
            <person name="Senoh A."/>
            <person name="Mizoguchi H."/>
            <person name="Goto Y."/>
            <person name="Shimizu F."/>
            <person name="Wakebe H."/>
            <person name="Hishigaki H."/>
            <person name="Watanabe T."/>
            <person name="Sugiyama A."/>
            <person name="Takemoto M."/>
            <person name="Kawakami B."/>
            <person name="Yamazaki M."/>
            <person name="Watanabe K."/>
            <person name="Kumagai A."/>
            <person name="Itakura S."/>
            <person name="Fukuzumi Y."/>
            <person name="Fujimori Y."/>
            <person name="Komiyama M."/>
            <person name="Tashiro H."/>
            <person name="Tanigami A."/>
            <person name="Fujiwara T."/>
            <person name="Ono T."/>
            <person name="Yamada K."/>
            <person name="Fujii Y."/>
            <person name="Ozaki K."/>
            <person name="Hirao M."/>
            <person name="Ohmori Y."/>
            <person name="Kawabata A."/>
            <person name="Hikiji T."/>
            <person name="Kobatake N."/>
            <person name="Inagaki H."/>
            <person name="Ikema Y."/>
            <person name="Okamoto S."/>
            <person name="Okitani R."/>
            <person name="Kawakami T."/>
            <person name="Noguchi S."/>
            <person name="Itoh T."/>
            <person name="Shigeta K."/>
            <person name="Senba T."/>
            <person name="Matsumura K."/>
            <person name="Nakajima Y."/>
            <person name="Mizuno T."/>
            <person name="Morinaga M."/>
            <person name="Sasaki M."/>
            <person name="Togashi T."/>
            <person name="Oyama M."/>
            <person name="Hata H."/>
            <person name="Watanabe M."/>
            <person name="Komatsu T."/>
            <person name="Mizushima-Sugano J."/>
            <person name="Satoh T."/>
            <person name="Shirai Y."/>
            <person name="Takahashi Y."/>
            <person name="Nakagawa K."/>
            <person name="Okumura K."/>
            <person name="Nagase T."/>
            <person name="Nomura N."/>
            <person name="Kikuchi H."/>
            <person name="Masuho Y."/>
            <person name="Yamashita R."/>
            <person name="Nakai K."/>
            <person name="Yada T."/>
            <person name="Nakamura Y."/>
            <person name="Ohara O."/>
            <person name="Isogai T."/>
            <person name="Sugano S."/>
        </authorList>
    </citation>
    <scope>NUCLEOTIDE SEQUENCE [LARGE SCALE MRNA] (ISOFORM 3)</scope>
    <source>
        <tissue>Cerebellum</tissue>
    </source>
</reference>
<reference key="6">
    <citation type="journal article" date="2004" name="Nature">
        <title>The DNA sequence and biology of human chromosome 19.</title>
        <authorList>
            <person name="Grimwood J."/>
            <person name="Gordon L.A."/>
            <person name="Olsen A.S."/>
            <person name="Terry A."/>
            <person name="Schmutz J."/>
            <person name="Lamerdin J.E."/>
            <person name="Hellsten U."/>
            <person name="Goodstein D."/>
            <person name="Couronne O."/>
            <person name="Tran-Gyamfi M."/>
            <person name="Aerts A."/>
            <person name="Altherr M."/>
            <person name="Ashworth L."/>
            <person name="Bajorek E."/>
            <person name="Black S."/>
            <person name="Branscomb E."/>
            <person name="Caenepeel S."/>
            <person name="Carrano A.V."/>
            <person name="Caoile C."/>
            <person name="Chan Y.M."/>
            <person name="Christensen M."/>
            <person name="Cleland C.A."/>
            <person name="Copeland A."/>
            <person name="Dalin E."/>
            <person name="Dehal P."/>
            <person name="Denys M."/>
            <person name="Detter J.C."/>
            <person name="Escobar J."/>
            <person name="Flowers D."/>
            <person name="Fotopulos D."/>
            <person name="Garcia C."/>
            <person name="Georgescu A.M."/>
            <person name="Glavina T."/>
            <person name="Gomez M."/>
            <person name="Gonzales E."/>
            <person name="Groza M."/>
            <person name="Hammon N."/>
            <person name="Hawkins T."/>
            <person name="Haydu L."/>
            <person name="Ho I."/>
            <person name="Huang W."/>
            <person name="Israni S."/>
            <person name="Jett J."/>
            <person name="Kadner K."/>
            <person name="Kimball H."/>
            <person name="Kobayashi A."/>
            <person name="Larionov V."/>
            <person name="Leem S.-H."/>
            <person name="Lopez F."/>
            <person name="Lou Y."/>
            <person name="Lowry S."/>
            <person name="Malfatti S."/>
            <person name="Martinez D."/>
            <person name="McCready P.M."/>
            <person name="Medina C."/>
            <person name="Morgan J."/>
            <person name="Nelson K."/>
            <person name="Nolan M."/>
            <person name="Ovcharenko I."/>
            <person name="Pitluck S."/>
            <person name="Pollard M."/>
            <person name="Popkie A.P."/>
            <person name="Predki P."/>
            <person name="Quan G."/>
            <person name="Ramirez L."/>
            <person name="Rash S."/>
            <person name="Retterer J."/>
            <person name="Rodriguez A."/>
            <person name="Rogers S."/>
            <person name="Salamov A."/>
            <person name="Salazar A."/>
            <person name="She X."/>
            <person name="Smith D."/>
            <person name="Slezak T."/>
            <person name="Solovyev V."/>
            <person name="Thayer N."/>
            <person name="Tice H."/>
            <person name="Tsai M."/>
            <person name="Ustaszewska A."/>
            <person name="Vo N."/>
            <person name="Wagner M."/>
            <person name="Wheeler J."/>
            <person name="Wu K."/>
            <person name="Xie G."/>
            <person name="Yang J."/>
            <person name="Dubchak I."/>
            <person name="Furey T.S."/>
            <person name="DeJong P."/>
            <person name="Dickson M."/>
            <person name="Gordon D."/>
            <person name="Eichler E.E."/>
            <person name="Pennacchio L.A."/>
            <person name="Richardson P."/>
            <person name="Stubbs L."/>
            <person name="Rokhsar D.S."/>
            <person name="Myers R.M."/>
            <person name="Rubin E.M."/>
            <person name="Lucas S.M."/>
        </authorList>
    </citation>
    <scope>NUCLEOTIDE SEQUENCE [LARGE SCALE GENOMIC DNA]</scope>
</reference>
<reference key="7">
    <citation type="submission" date="2005-09" db="EMBL/GenBank/DDBJ databases">
        <authorList>
            <person name="Mural R.J."/>
            <person name="Istrail S."/>
            <person name="Sutton G.G."/>
            <person name="Florea L."/>
            <person name="Halpern A.L."/>
            <person name="Mobarry C.M."/>
            <person name="Lippert R."/>
            <person name="Walenz B."/>
            <person name="Shatkay H."/>
            <person name="Dew I."/>
            <person name="Miller J.R."/>
            <person name="Flanigan M.J."/>
            <person name="Edwards N.J."/>
            <person name="Bolanos R."/>
            <person name="Fasulo D."/>
            <person name="Halldorsson B.V."/>
            <person name="Hannenhalli S."/>
            <person name="Turner R."/>
            <person name="Yooseph S."/>
            <person name="Lu F."/>
            <person name="Nusskern D.R."/>
            <person name="Shue B.C."/>
            <person name="Zheng X.H."/>
            <person name="Zhong F."/>
            <person name="Delcher A.L."/>
            <person name="Huson D.H."/>
            <person name="Kravitz S.A."/>
            <person name="Mouchard L."/>
            <person name="Reinert K."/>
            <person name="Remington K.A."/>
            <person name="Clark A.G."/>
            <person name="Waterman M.S."/>
            <person name="Eichler E.E."/>
            <person name="Adams M.D."/>
            <person name="Hunkapiller M.W."/>
            <person name="Myers E.W."/>
            <person name="Venter J.C."/>
        </authorList>
    </citation>
    <scope>NUCLEOTIDE SEQUENCE [LARGE SCALE GENOMIC DNA]</scope>
</reference>
<reference key="8">
    <citation type="journal article" date="2004" name="Genome Res.">
        <title>The status, quality, and expansion of the NIH full-length cDNA project: the Mammalian Gene Collection (MGC).</title>
        <authorList>
            <consortium name="The MGC Project Team"/>
        </authorList>
    </citation>
    <scope>NUCLEOTIDE SEQUENCE [LARGE SCALE MRNA] (ISOFORM 1)</scope>
    <source>
        <tissue>Pancreas</tissue>
        <tissue>Placenta</tissue>
        <tissue>Skin</tissue>
        <tissue>Uterus</tissue>
    </source>
</reference>
<reference key="9">
    <citation type="submission" date="1998-06" db="EMBL/GenBank/DDBJ databases">
        <authorList>
            <person name="Suzuki H."/>
            <person name="Schullery D."/>
            <person name="Shnyreva M.G."/>
            <person name="Ostrowski J."/>
            <person name="Denisenko O."/>
            <person name="Mochizuki S."/>
            <person name="Bomsztyk K."/>
        </authorList>
    </citation>
    <scope>NUCLEOTIDE SEQUENCE [MRNA] OF 97-317 (ISOFORM 1)</scope>
    <source>
        <tissue>Heart</tissue>
    </source>
</reference>
<reference key="10">
    <citation type="submission" date="2004-06" db="EMBL/GenBank/DDBJ databases">
        <title>Cloning of human full open reading frames in Gateway(TM) system entry vector (pDONR201).</title>
        <authorList>
            <person name="Ebert L."/>
            <person name="Schick M."/>
            <person name="Neubert P."/>
            <person name="Schatten R."/>
            <person name="Henze S."/>
            <person name="Korn B."/>
        </authorList>
    </citation>
    <scope>NUCLEOTIDE SEQUENCE [LARGE SCALE MRNA] OF 103-317 (ISOFORM 1)</scope>
</reference>
<reference key="11">
    <citation type="journal article" date="2002" name="Proc. Natl. Acad. Sci. U.S.A.">
        <title>A core-BRAF35 complex containing histone deacetylase mediates repression of neuronal-specific genes.</title>
        <authorList>
            <person name="Hakimi M.-A."/>
            <person name="Bochar D.A."/>
            <person name="Chenoweth J."/>
            <person name="Lane W.S."/>
            <person name="Mandel G."/>
            <person name="Shiekhattar R."/>
        </authorList>
    </citation>
    <scope>IDENTIFICATION AS A COMPONENT OF A HISTONE DEACETYLASE COMPLEX</scope>
    <scope>MUTAGENESIS OF LYS-116</scope>
</reference>
<reference key="12">
    <citation type="journal article" date="2003" name="J. Biol. Chem.">
        <title>A candidate X-linked mental retardation gene is a component of a new family of histone deacetylase-containing complexes.</title>
        <authorList>
            <person name="Hakimi M.-A."/>
            <person name="Dong Y."/>
            <person name="Lane W.S."/>
            <person name="Speicher D.W."/>
            <person name="Shiekhattar R."/>
        </authorList>
    </citation>
    <scope>IDENTIFICATION IN THE BHC COMPLEX WITH GSE1; GTF2I; HDAC1; HDAC2; KDM1A; PHF21A; RCOR1; ZMYM2; ZMYM3 AND ZNF217</scope>
</reference>
<reference key="13">
    <citation type="journal article" date="2013" name="J. Proteome Res.">
        <title>Toward a comprehensive characterization of a human cancer cell phosphoproteome.</title>
        <authorList>
            <person name="Zhou H."/>
            <person name="Di Palma S."/>
            <person name="Preisinger C."/>
            <person name="Peng M."/>
            <person name="Polat A.N."/>
            <person name="Heck A.J."/>
            <person name="Mohammed S."/>
        </authorList>
    </citation>
    <scope>PHOSPHORYLATION [LARGE SCALE ANALYSIS] AT SER-160</scope>
    <scope>IDENTIFICATION BY MASS SPECTROMETRY [LARGE SCALE ANALYSIS]</scope>
    <source>
        <tissue>Erythroleukemia</tissue>
    </source>
</reference>
<reference key="14">
    <citation type="journal article" date="2014" name="Nat. Struct. Mol. Biol.">
        <title>Uncovering global SUMOylation signaling networks in a site-specific manner.</title>
        <authorList>
            <person name="Hendriks I.A."/>
            <person name="D'Souza R.C."/>
            <person name="Yang B."/>
            <person name="Verlaan-de Vries M."/>
            <person name="Mann M."/>
            <person name="Vertegaal A.C."/>
        </authorList>
    </citation>
    <scope>SUMOYLATION [LARGE SCALE ANALYSIS] AT LYS-31</scope>
    <scope>IDENTIFICATION BY MASS SPECTROMETRY [LARGE SCALE ANALYSIS]</scope>
</reference>
<reference key="15">
    <citation type="journal article" date="2017" name="Nat. Struct. Mol. Biol.">
        <title>Site-specific mapping of the human SUMO proteome reveals co-modification with phosphorylation.</title>
        <authorList>
            <person name="Hendriks I.A."/>
            <person name="Lyon D."/>
            <person name="Young C."/>
            <person name="Jensen L.J."/>
            <person name="Vertegaal A.C."/>
            <person name="Nielsen M.L."/>
        </authorList>
    </citation>
    <scope>SUMOYLATION [LARGE SCALE ANALYSIS] AT LYS-31</scope>
    <scope>IDENTIFICATION BY MASS SPECTROMETRY [LARGE SCALE ANALYSIS]</scope>
</reference>